<reference key="1">
    <citation type="submission" date="2008-10" db="EMBL/GenBank/DDBJ databases">
        <title>Complete sequence of Desulfovibrio vulgaris str. 'Miyazaki F'.</title>
        <authorList>
            <person name="Lucas S."/>
            <person name="Copeland A."/>
            <person name="Lapidus A."/>
            <person name="Glavina del Rio T."/>
            <person name="Dalin E."/>
            <person name="Tice H."/>
            <person name="Bruce D."/>
            <person name="Goodwin L."/>
            <person name="Pitluck S."/>
            <person name="Sims D."/>
            <person name="Brettin T."/>
            <person name="Detter J.C."/>
            <person name="Han C."/>
            <person name="Larimer F."/>
            <person name="Land M."/>
            <person name="Hauser L."/>
            <person name="Kyrpides N."/>
            <person name="Mikhailova N."/>
            <person name="Hazen T.C."/>
            <person name="Richardson P."/>
        </authorList>
    </citation>
    <scope>NUCLEOTIDE SEQUENCE [LARGE SCALE GENOMIC DNA]</scope>
    <source>
        <strain>DSM 19637 / Miyazaki F</strain>
    </source>
</reference>
<protein>
    <recommendedName>
        <fullName evidence="1">Chaperone protein DnaJ</fullName>
    </recommendedName>
</protein>
<name>DNAJ_NITV9</name>
<evidence type="ECO:0000255" key="1">
    <source>
        <dbReference type="HAMAP-Rule" id="MF_01152"/>
    </source>
</evidence>
<comment type="function">
    <text evidence="1">Participates actively in the response to hyperosmotic and heat shock by preventing the aggregation of stress-denatured proteins and by disaggregating proteins, also in an autonomous, DnaK-independent fashion. Unfolded proteins bind initially to DnaJ; upon interaction with the DnaJ-bound protein, DnaK hydrolyzes its bound ATP, resulting in the formation of a stable complex. GrpE releases ADP from DnaK; ATP binding to DnaK triggers the release of the substrate protein, thus completing the reaction cycle. Several rounds of ATP-dependent interactions between DnaJ, DnaK and GrpE are required for fully efficient folding. Also involved, together with DnaK and GrpE, in the DNA replication of plasmids through activation of initiation proteins.</text>
</comment>
<comment type="cofactor">
    <cofactor evidence="1">
        <name>Zn(2+)</name>
        <dbReference type="ChEBI" id="CHEBI:29105"/>
    </cofactor>
    <text evidence="1">Binds 2 Zn(2+) ions per monomer.</text>
</comment>
<comment type="subunit">
    <text evidence="1">Homodimer.</text>
</comment>
<comment type="subcellular location">
    <subcellularLocation>
        <location evidence="1">Cytoplasm</location>
    </subcellularLocation>
</comment>
<comment type="domain">
    <text evidence="1">The J domain is necessary and sufficient to stimulate DnaK ATPase activity. Zinc center 1 plays an important role in the autonomous, DnaK-independent chaperone activity of DnaJ. Zinc center 2 is essential for interaction with DnaK and for DnaJ activity.</text>
</comment>
<comment type="similarity">
    <text evidence="1">Belongs to the DnaJ family.</text>
</comment>
<accession>B8DQW8</accession>
<proteinExistence type="inferred from homology"/>
<keyword id="KW-0143">Chaperone</keyword>
<keyword id="KW-0963">Cytoplasm</keyword>
<keyword id="KW-0235">DNA replication</keyword>
<keyword id="KW-0479">Metal-binding</keyword>
<keyword id="KW-0677">Repeat</keyword>
<keyword id="KW-0346">Stress response</keyword>
<keyword id="KW-0862">Zinc</keyword>
<keyword id="KW-0863">Zinc-finger</keyword>
<sequence length="374" mass="41044">MSQRDYYEVLGVARDASEDEIKRQYRKLALQYHPDRNPDNPEAEQMFKEAAEAYDVLRDADKRARYDRFGHAGLNGNGGGHGFANADDVFAHFSDIFGDLFGFATGSSRMRGPRPQAGADLRYNLSISFRQAAKGDEVTLRLPKKVTCDECNGSGAAAGTKPETCRHCGGNGQIRQSQGFFQIAVPCPVCRGEGQVIPTPCPKCKGSGILQQVRELAVRIPAGVDTGNRLRLRGEGEPGLHGGPPGDLYVVVSVEQDKTFRRQGQDLVITHEVSFVQAALGDRIEVPTLDDPVTLDIPKGTQSGEVFRLTDQGLPYLGHHQKGDLLVEVRVLTPVSLTKKQEELLREFAKLEEGKPFEKVKKVARKIGKAMGME</sequence>
<feature type="chain" id="PRO_1000137680" description="Chaperone protein DnaJ">
    <location>
        <begin position="1"/>
        <end position="374"/>
    </location>
</feature>
<feature type="domain" description="J" evidence="1">
    <location>
        <begin position="5"/>
        <end position="70"/>
    </location>
</feature>
<feature type="repeat" description="CXXCXGXG motif">
    <location>
        <begin position="148"/>
        <end position="155"/>
    </location>
</feature>
<feature type="repeat" description="CXXCXGXG motif">
    <location>
        <begin position="165"/>
        <end position="172"/>
    </location>
</feature>
<feature type="repeat" description="CXXCXGXG motif">
    <location>
        <begin position="187"/>
        <end position="194"/>
    </location>
</feature>
<feature type="repeat" description="CXXCXGXG motif">
    <location>
        <begin position="201"/>
        <end position="208"/>
    </location>
</feature>
<feature type="zinc finger region" description="CR-type" evidence="1">
    <location>
        <begin position="135"/>
        <end position="213"/>
    </location>
</feature>
<feature type="binding site" evidence="1">
    <location>
        <position position="148"/>
    </location>
    <ligand>
        <name>Zn(2+)</name>
        <dbReference type="ChEBI" id="CHEBI:29105"/>
        <label>1</label>
    </ligand>
</feature>
<feature type="binding site" evidence="1">
    <location>
        <position position="151"/>
    </location>
    <ligand>
        <name>Zn(2+)</name>
        <dbReference type="ChEBI" id="CHEBI:29105"/>
        <label>1</label>
    </ligand>
</feature>
<feature type="binding site" evidence="1">
    <location>
        <position position="165"/>
    </location>
    <ligand>
        <name>Zn(2+)</name>
        <dbReference type="ChEBI" id="CHEBI:29105"/>
        <label>2</label>
    </ligand>
</feature>
<feature type="binding site" evidence="1">
    <location>
        <position position="168"/>
    </location>
    <ligand>
        <name>Zn(2+)</name>
        <dbReference type="ChEBI" id="CHEBI:29105"/>
        <label>2</label>
    </ligand>
</feature>
<feature type="binding site" evidence="1">
    <location>
        <position position="187"/>
    </location>
    <ligand>
        <name>Zn(2+)</name>
        <dbReference type="ChEBI" id="CHEBI:29105"/>
        <label>2</label>
    </ligand>
</feature>
<feature type="binding site" evidence="1">
    <location>
        <position position="190"/>
    </location>
    <ligand>
        <name>Zn(2+)</name>
        <dbReference type="ChEBI" id="CHEBI:29105"/>
        <label>2</label>
    </ligand>
</feature>
<feature type="binding site" evidence="1">
    <location>
        <position position="201"/>
    </location>
    <ligand>
        <name>Zn(2+)</name>
        <dbReference type="ChEBI" id="CHEBI:29105"/>
        <label>1</label>
    </ligand>
</feature>
<feature type="binding site" evidence="1">
    <location>
        <position position="204"/>
    </location>
    <ligand>
        <name>Zn(2+)</name>
        <dbReference type="ChEBI" id="CHEBI:29105"/>
        <label>1</label>
    </ligand>
</feature>
<dbReference type="EMBL" id="CP001197">
    <property type="protein sequence ID" value="ACL09237.1"/>
    <property type="molecule type" value="Genomic_DNA"/>
</dbReference>
<dbReference type="SMR" id="B8DQW8"/>
<dbReference type="STRING" id="883.DvMF_2295"/>
<dbReference type="KEGG" id="dvm:DvMF_2295"/>
<dbReference type="eggNOG" id="COG0484">
    <property type="taxonomic scope" value="Bacteria"/>
</dbReference>
<dbReference type="HOGENOM" id="CLU_017633_0_7_7"/>
<dbReference type="OrthoDB" id="9779889at2"/>
<dbReference type="GO" id="GO:0005737">
    <property type="term" value="C:cytoplasm"/>
    <property type="evidence" value="ECO:0007669"/>
    <property type="project" value="UniProtKB-SubCell"/>
</dbReference>
<dbReference type="GO" id="GO:0005524">
    <property type="term" value="F:ATP binding"/>
    <property type="evidence" value="ECO:0007669"/>
    <property type="project" value="InterPro"/>
</dbReference>
<dbReference type="GO" id="GO:0031072">
    <property type="term" value="F:heat shock protein binding"/>
    <property type="evidence" value="ECO:0007669"/>
    <property type="project" value="InterPro"/>
</dbReference>
<dbReference type="GO" id="GO:0051082">
    <property type="term" value="F:unfolded protein binding"/>
    <property type="evidence" value="ECO:0007669"/>
    <property type="project" value="UniProtKB-UniRule"/>
</dbReference>
<dbReference type="GO" id="GO:0008270">
    <property type="term" value="F:zinc ion binding"/>
    <property type="evidence" value="ECO:0007669"/>
    <property type="project" value="UniProtKB-UniRule"/>
</dbReference>
<dbReference type="GO" id="GO:0051085">
    <property type="term" value="P:chaperone cofactor-dependent protein refolding"/>
    <property type="evidence" value="ECO:0007669"/>
    <property type="project" value="TreeGrafter"/>
</dbReference>
<dbReference type="GO" id="GO:0006260">
    <property type="term" value="P:DNA replication"/>
    <property type="evidence" value="ECO:0007669"/>
    <property type="project" value="UniProtKB-KW"/>
</dbReference>
<dbReference type="GO" id="GO:0042026">
    <property type="term" value="P:protein refolding"/>
    <property type="evidence" value="ECO:0007669"/>
    <property type="project" value="TreeGrafter"/>
</dbReference>
<dbReference type="GO" id="GO:0009408">
    <property type="term" value="P:response to heat"/>
    <property type="evidence" value="ECO:0007669"/>
    <property type="project" value="InterPro"/>
</dbReference>
<dbReference type="CDD" id="cd06257">
    <property type="entry name" value="DnaJ"/>
    <property type="match status" value="1"/>
</dbReference>
<dbReference type="CDD" id="cd10747">
    <property type="entry name" value="DnaJ_C"/>
    <property type="match status" value="1"/>
</dbReference>
<dbReference type="CDD" id="cd10719">
    <property type="entry name" value="DnaJ_zf"/>
    <property type="match status" value="1"/>
</dbReference>
<dbReference type="FunFam" id="1.10.287.110:FF:000034">
    <property type="entry name" value="Chaperone protein DnaJ"/>
    <property type="match status" value="1"/>
</dbReference>
<dbReference type="FunFam" id="2.60.260.20:FF:000005">
    <property type="entry name" value="Chaperone protein dnaJ 1, mitochondrial"/>
    <property type="match status" value="1"/>
</dbReference>
<dbReference type="FunFam" id="2.10.230.10:FF:000002">
    <property type="entry name" value="Molecular chaperone DnaJ"/>
    <property type="match status" value="1"/>
</dbReference>
<dbReference type="Gene3D" id="1.10.287.110">
    <property type="entry name" value="DnaJ domain"/>
    <property type="match status" value="1"/>
</dbReference>
<dbReference type="Gene3D" id="2.10.230.10">
    <property type="entry name" value="Heat shock protein DnaJ, cysteine-rich domain"/>
    <property type="match status" value="1"/>
</dbReference>
<dbReference type="Gene3D" id="2.60.260.20">
    <property type="entry name" value="Urease metallochaperone UreE, N-terminal domain"/>
    <property type="match status" value="2"/>
</dbReference>
<dbReference type="HAMAP" id="MF_01152">
    <property type="entry name" value="DnaJ"/>
    <property type="match status" value="1"/>
</dbReference>
<dbReference type="InterPro" id="IPR012724">
    <property type="entry name" value="DnaJ"/>
</dbReference>
<dbReference type="InterPro" id="IPR002939">
    <property type="entry name" value="DnaJ_C"/>
</dbReference>
<dbReference type="InterPro" id="IPR001623">
    <property type="entry name" value="DnaJ_domain"/>
</dbReference>
<dbReference type="InterPro" id="IPR018253">
    <property type="entry name" value="DnaJ_domain_CS"/>
</dbReference>
<dbReference type="InterPro" id="IPR008971">
    <property type="entry name" value="HSP40/DnaJ_pept-bd"/>
</dbReference>
<dbReference type="InterPro" id="IPR001305">
    <property type="entry name" value="HSP_DnaJ_Cys-rich_dom"/>
</dbReference>
<dbReference type="InterPro" id="IPR036410">
    <property type="entry name" value="HSP_DnaJ_Cys-rich_dom_sf"/>
</dbReference>
<dbReference type="InterPro" id="IPR036869">
    <property type="entry name" value="J_dom_sf"/>
</dbReference>
<dbReference type="NCBIfam" id="TIGR02349">
    <property type="entry name" value="DnaJ_bact"/>
    <property type="match status" value="1"/>
</dbReference>
<dbReference type="NCBIfam" id="NF008035">
    <property type="entry name" value="PRK10767.1"/>
    <property type="match status" value="1"/>
</dbReference>
<dbReference type="NCBIfam" id="NF010894">
    <property type="entry name" value="PRK14301.1"/>
    <property type="match status" value="1"/>
</dbReference>
<dbReference type="PANTHER" id="PTHR43096">
    <property type="entry name" value="DNAJ HOMOLOG 1, MITOCHONDRIAL-RELATED"/>
    <property type="match status" value="1"/>
</dbReference>
<dbReference type="PANTHER" id="PTHR43096:SF52">
    <property type="entry name" value="DNAJ HOMOLOG 1, MITOCHONDRIAL-RELATED"/>
    <property type="match status" value="1"/>
</dbReference>
<dbReference type="Pfam" id="PF00226">
    <property type="entry name" value="DnaJ"/>
    <property type="match status" value="1"/>
</dbReference>
<dbReference type="Pfam" id="PF01556">
    <property type="entry name" value="DnaJ_C"/>
    <property type="match status" value="1"/>
</dbReference>
<dbReference type="Pfam" id="PF00684">
    <property type="entry name" value="DnaJ_CXXCXGXG"/>
    <property type="match status" value="1"/>
</dbReference>
<dbReference type="PRINTS" id="PR00625">
    <property type="entry name" value="JDOMAIN"/>
</dbReference>
<dbReference type="SMART" id="SM00271">
    <property type="entry name" value="DnaJ"/>
    <property type="match status" value="1"/>
</dbReference>
<dbReference type="SUPFAM" id="SSF46565">
    <property type="entry name" value="Chaperone J-domain"/>
    <property type="match status" value="1"/>
</dbReference>
<dbReference type="SUPFAM" id="SSF57938">
    <property type="entry name" value="DnaJ/Hsp40 cysteine-rich domain"/>
    <property type="match status" value="1"/>
</dbReference>
<dbReference type="SUPFAM" id="SSF49493">
    <property type="entry name" value="HSP40/DnaJ peptide-binding domain"/>
    <property type="match status" value="2"/>
</dbReference>
<dbReference type="PROSITE" id="PS00636">
    <property type="entry name" value="DNAJ_1"/>
    <property type="match status" value="1"/>
</dbReference>
<dbReference type="PROSITE" id="PS50076">
    <property type="entry name" value="DNAJ_2"/>
    <property type="match status" value="1"/>
</dbReference>
<dbReference type="PROSITE" id="PS51188">
    <property type="entry name" value="ZF_CR"/>
    <property type="match status" value="1"/>
</dbReference>
<gene>
    <name evidence="1" type="primary">dnaJ</name>
    <name type="ordered locus">DvMF_2295</name>
</gene>
<organism>
    <name type="scientific">Nitratidesulfovibrio vulgaris (strain DSM 19637 / Miyazaki F)</name>
    <name type="common">Desulfovibrio vulgaris</name>
    <dbReference type="NCBI Taxonomy" id="883"/>
    <lineage>
        <taxon>Bacteria</taxon>
        <taxon>Pseudomonadati</taxon>
        <taxon>Thermodesulfobacteriota</taxon>
        <taxon>Desulfovibrionia</taxon>
        <taxon>Desulfovibrionales</taxon>
        <taxon>Desulfovibrionaceae</taxon>
        <taxon>Nitratidesulfovibrio</taxon>
    </lineage>
</organism>